<gene>
    <name type="primary">U43</name>
    <name type="synonym">KA4L</name>
</gene>
<sequence length="860" mass="100003">MTIVVFATEYDAANVIFSILCRSPSEHLIFPIIVKYKPSNNVSFCLQTQKCKNSKRIDTVFVCHAEKLNLSHYIQTASPIKAEDVANSLNDKETELLYVDMILSQTGKEKEDVEFKYMAYFHKSLIIKYLTGKFLLPTSPFWFLSTYGQTEGLLLLTMYYYLFEEQKSTITTTKNYVQCFTENTGSMVFTYSSMSEFINITLKSKFRKLFADFATYARQKNLRDKEEFKYLDTQINLFRKSSHLTNTFRVHYIYIAYNTALETTKFVNYCNITSYDSNLPIGQQCQRNVHILGNSLHENLLCIMKQYFNADCYFKTYIDIKRLKNPDLNVTEYEYALASKKKTIQALTSEQITRAIAKCNKNGEGLFSPVKPGLQGLLEISASDKYVQIQDKRIYRRQHLHKDYHRPFPVFRVQLLHKNIFCFGNSEDWYENMGFNRILQYLPDEYISDEALTRAIWLQDTHFLCDDFEKQFYTTRHEIFNERIPVTNYIGDLDLPLQDTATITEETFFSMCRLIRLTLINAWKKIFPSIDTHTHPIFFFKTQCDTTNDALDYTEDPTEIKQFCICRKKIGLRISIPLPNGTAIAGGEPLKQLSKILNHVMCLDQELSQILNSLTFPGECFDIGIYHTGHCIRIGYMYKTDMDKGKMLHGRLTPIFIVPEGYRNSCKTFIQMQMDLNNLLHHGTKKAPIEELIYSITDKGCPKENLSFMDLKSRQLWNKVNIATDTLITKYLNTHGFNNNATSADDSLLSFIRLIGWPIIKTQLITHYETRIAQQFSQVTFLKIDSKNLQIKKTQFGRVSDFSCLNRQHRGNRDNVLVYIQLKADGNRLILILWSTCFATKCQSNSKQVHCSIALEQLKN</sequence>
<dbReference type="EC" id="2.7.7.-" evidence="1"/>
<dbReference type="EMBL" id="AF157706">
    <property type="protein sequence ID" value="AAB06341.1"/>
    <property type="molecule type" value="Genomic_DNA"/>
</dbReference>
<dbReference type="PIR" id="T44003">
    <property type="entry name" value="T44003"/>
</dbReference>
<dbReference type="RefSeq" id="NP_050224.1">
    <property type="nucleotide sequence ID" value="NC_000898.1"/>
</dbReference>
<dbReference type="DNASU" id="1497045"/>
<dbReference type="GeneID" id="1497045"/>
<dbReference type="KEGG" id="vg:1497045"/>
<dbReference type="Proteomes" id="UP000006930">
    <property type="component" value="Segment"/>
</dbReference>
<dbReference type="GO" id="GO:0042025">
    <property type="term" value="C:host cell nucleus"/>
    <property type="evidence" value="ECO:0007669"/>
    <property type="project" value="UniProtKB-SubCell"/>
</dbReference>
<dbReference type="GO" id="GO:0003899">
    <property type="term" value="F:DNA-directed RNA polymerase activity"/>
    <property type="evidence" value="ECO:0007669"/>
    <property type="project" value="InterPro"/>
</dbReference>
<dbReference type="GO" id="GO:0008270">
    <property type="term" value="F:zinc ion binding"/>
    <property type="evidence" value="ECO:0007669"/>
    <property type="project" value="UniProtKB-KW"/>
</dbReference>
<dbReference type="GO" id="GO:0039686">
    <property type="term" value="P:bidirectional double-stranded viral DNA replication"/>
    <property type="evidence" value="ECO:0007669"/>
    <property type="project" value="InterPro"/>
</dbReference>
<dbReference type="GO" id="GO:0006260">
    <property type="term" value="P:DNA replication"/>
    <property type="evidence" value="ECO:0007669"/>
    <property type="project" value="UniProtKB-KW"/>
</dbReference>
<dbReference type="HAMAP" id="MF_04011">
    <property type="entry name" value="HSV_PRIM"/>
    <property type="match status" value="1"/>
</dbReference>
<dbReference type="InterPro" id="IPR033685">
    <property type="entry name" value="HSV_PRIM"/>
</dbReference>
<dbReference type="Pfam" id="PF03121">
    <property type="entry name" value="Herpes_UL52"/>
    <property type="match status" value="1"/>
</dbReference>
<feature type="chain" id="PRO_0000116109" description="DNA primase">
    <location>
        <begin position="1"/>
        <end position="860"/>
    </location>
</feature>
<feature type="zinc finger region" description="CHC2-type" evidence="1">
    <location>
        <begin position="804"/>
        <end position="842"/>
    </location>
</feature>
<feature type="site" description="Essential for primase activity" evidence="1">
    <location>
        <position position="492"/>
    </location>
</feature>
<feature type="site" description="Essential for primase activity" evidence="1">
    <location>
        <position position="494"/>
    </location>
</feature>
<protein>
    <recommendedName>
        <fullName evidence="1">DNA primase</fullName>
        <ecNumber evidence="1">2.7.7.-</ecNumber>
    </recommendedName>
</protein>
<name>PRIM_HHV6Z</name>
<proteinExistence type="inferred from homology"/>
<reference key="1">
    <citation type="journal article" date="1995" name="J. Virol.">
        <title>Intragenomic linear amplification of human herpesvirus 6B oriLyt suggests acquisition of oriLyt by transposition.</title>
        <authorList>
            <person name="Stamey F.R."/>
            <person name="Dominguez G."/>
            <person name="Black J.B."/>
            <person name="Dambaugh T.R."/>
            <person name="Pellett P.E."/>
        </authorList>
    </citation>
    <scope>NUCLEOTIDE SEQUENCE [GENOMIC DNA]</scope>
</reference>
<reference key="2">
    <citation type="journal article" date="1999" name="J. Virol.">
        <title>Human herpesvirus 6B genome sequence: coding content and comparison with human herpesvirus 6A.</title>
        <authorList>
            <person name="Dominguez G."/>
            <person name="Dambaugh T.R."/>
            <person name="Stamey F.R."/>
            <person name="Dewhurst S."/>
            <person name="Inoue N."/>
            <person name="Pellett P.E."/>
        </authorList>
    </citation>
    <scope>NUCLEOTIDE SEQUENCE [LARGE SCALE GENOMIC DNA]</scope>
</reference>
<keyword id="KW-0235">DNA replication</keyword>
<keyword id="KW-1048">Host nucleus</keyword>
<keyword id="KW-0479">Metal-binding</keyword>
<keyword id="KW-1185">Reference proteome</keyword>
<keyword id="KW-0808">Transferase</keyword>
<keyword id="KW-0862">Zinc</keyword>
<keyword id="KW-0863">Zinc-finger</keyword>
<evidence type="ECO:0000255" key="1">
    <source>
        <dbReference type="HAMAP-Rule" id="MF_04011"/>
    </source>
</evidence>
<comment type="function">
    <text evidence="1">Essential component of the helicase/primase complex. Unwinds the DNA at the replication forks and generates single-stranded DNA for both leading and lagging strand synthesis. The primase initiates primer synthesis and thereby produces large amount of short RNA primers on the lagging strand that the polymerase elongates using dNTPs.</text>
</comment>
<comment type="subunit">
    <text evidence="1">Associates with the helicase and the primase-associated factor to form the helicase-primase factor.</text>
</comment>
<comment type="subcellular location">
    <subcellularLocation>
        <location evidence="1">Host nucleus</location>
    </subcellularLocation>
    <text evidence="1">Requires the presence of the primase associated factor to properly localize in the host cell nucleus.</text>
</comment>
<comment type="similarity">
    <text evidence="1">Belongs to the herpesviridae DNA primase family.</text>
</comment>
<accession>P52540</accession>
<organismHost>
    <name type="scientific">Homo sapiens</name>
    <name type="common">Human</name>
    <dbReference type="NCBI Taxonomy" id="9606"/>
</organismHost>
<organism>
    <name type="scientific">Human herpesvirus 6B (strain Z29)</name>
    <name type="common">HHV-6 variant B</name>
    <name type="synonym">Human B lymphotropic virus</name>
    <dbReference type="NCBI Taxonomy" id="36351"/>
    <lineage>
        <taxon>Viruses</taxon>
        <taxon>Duplodnaviria</taxon>
        <taxon>Heunggongvirae</taxon>
        <taxon>Peploviricota</taxon>
        <taxon>Herviviricetes</taxon>
        <taxon>Herpesvirales</taxon>
        <taxon>Orthoherpesviridae</taxon>
        <taxon>Betaherpesvirinae</taxon>
        <taxon>Roseolovirus</taxon>
        <taxon>Roseolovirus humanbeta6b</taxon>
        <taxon>Human herpesvirus 6B</taxon>
    </lineage>
</organism>